<accession>Q05233</accession>
<reference key="1">
    <citation type="journal article" date="1993" name="Mol. Microbiol.">
        <title>DNA sequence, structure and gene expression of mycobacteriophage L5: a phage system for mycobacterial genetics.</title>
        <authorList>
            <person name="Hatfull G.F."/>
            <person name="Sarkis G.J."/>
        </authorList>
    </citation>
    <scope>NUCLEOTIDE SEQUENCE [GENOMIC DNA]</scope>
    <scope>PROTEIN SEQUENCE OF 2-11</scope>
</reference>
<feature type="initiator methionine" description="Removed; by host" evidence="1">
    <location>
        <position position="1"/>
    </location>
</feature>
<feature type="chain" id="PRO_0000164741" description="Minor tail protein Gp26">
    <location>
        <begin position="2"/>
        <end position="837"/>
    </location>
</feature>
<proteinExistence type="evidence at protein level"/>
<name>VG26_BPML5</name>
<gene>
    <name type="primary">26</name>
</gene>
<organism>
    <name type="scientific">Mycobacterium phage L5</name>
    <name type="common">Mycobacteriophage L5</name>
    <dbReference type="NCBI Taxonomy" id="31757"/>
    <lineage>
        <taxon>Viruses</taxon>
        <taxon>Duplodnaviria</taxon>
        <taxon>Heunggongvirae</taxon>
        <taxon>Uroviricota</taxon>
        <taxon>Caudoviricetes</taxon>
        <taxon>Fromanvirus</taxon>
    </lineage>
</organism>
<keyword id="KW-0903">Direct protein sequencing</keyword>
<keyword id="KW-1185">Reference proteome</keyword>
<sequence length="837" mass="86390">MPNSAGVEVARISVKVSPNTKEFRRELKTELEKIERELKGDVEINGHLDAAQAKADFKRMMMQLKTEAAKGVHVPVDVTVDKKSKKGGLLGGLLGGSRGLGDLGDDAEKASSQVQHLGKSFLGLTRAAWIGVGIVAVAAPLVGIVAGLLAGLPSLLSAFGAGAGVVALGMDGIKAAASTLAPTLETVKAAVSSTFQQGLTPVFQQLGPMLTAITPNLQNVASGLVNMAGSITDVITQAPGLQQIQNILTKTGEFFTGLGPVLATGTQAFLTLSNAGANSFGTLLAPLQEFTNGFNDMVNRVTSNGVFEGAMQGLSQTLGSVLNLFNRLMESGLQAMGQLGGPLSTFINGFGDLFVSLMPALTSVSGLIGNVLGTLGTQLAPIVTALTPAFQTLASTLGTMLTGALQALGPILTQVATLIGTTLNTALQALQPMLPSLMQSFQQISDVLVTSLAPHIPALATALGQVAGAVLQLAPTIISTLVPAFVQLVPKVAELVPTIVNLVQSFANLMPVVLPLAQALVSVAGAVIQVGVSIGGALIGALANLTEIISNVIKKVSEWVSSFSSGAQQIAAKAAELPGMIQSALANLMAIGLQAGKDLVQGLINGIGGMVSAAVNKAKELASSVAGAVKGFLGIESPSKLFTEYGQFTAEGFGNGMEAGFKPVIERAKDLAAELSRAMESGTDPSGILAGLDQNELKQMLAALEEERKRLKVEKNGIPKGDKAGREALQNQLDQIQAQKDILSYQRDRIKNESEYGDMAGEDPLVKAASGLMSAPVDFAKATGKQFLSDIGISGDGFISKAITEGIQYIFQIGSVDEALSIKDREESKNALSVVGR</sequence>
<protein>
    <recommendedName>
        <fullName>Minor tail protein Gp26</fullName>
    </recommendedName>
</protein>
<organismHost>
    <name type="scientific">Mycobacterium</name>
    <dbReference type="NCBI Taxonomy" id="1763"/>
</organismHost>
<evidence type="ECO:0000269" key="1">
    <source>
    </source>
</evidence>
<dbReference type="EMBL" id="Z18946">
    <property type="protein sequence ID" value="CAA79402.1"/>
    <property type="molecule type" value="Genomic_DNA"/>
</dbReference>
<dbReference type="PIR" id="S30971">
    <property type="entry name" value="S30971"/>
</dbReference>
<dbReference type="RefSeq" id="NP_039690.1">
    <property type="nucleotide sequence ID" value="NC_001335.1"/>
</dbReference>
<dbReference type="SMR" id="Q05233"/>
<dbReference type="GeneID" id="2942949"/>
<dbReference type="KEGG" id="vg:2942949"/>
<dbReference type="OrthoDB" id="540at10239"/>
<dbReference type="Proteomes" id="UP000002123">
    <property type="component" value="Genome"/>
</dbReference>
<dbReference type="Gene3D" id="1.25.10.10">
    <property type="entry name" value="Leucine-rich Repeat Variant"/>
    <property type="match status" value="1"/>
</dbReference>
<dbReference type="InterPro" id="IPR011989">
    <property type="entry name" value="ARM-like"/>
</dbReference>
<dbReference type="InterPro" id="IPR016024">
    <property type="entry name" value="ARM-type_fold"/>
</dbReference>
<dbReference type="SUPFAM" id="SSF48371">
    <property type="entry name" value="ARM repeat"/>
    <property type="match status" value="1"/>
</dbReference>